<dbReference type="EC" id="7.6.2.-"/>
<dbReference type="EMBL" id="CP000253">
    <property type="protein sequence ID" value="ABD31649.1"/>
    <property type="molecule type" value="Genomic_DNA"/>
</dbReference>
<dbReference type="RefSeq" id="WP_001229911.1">
    <property type="nucleotide sequence ID" value="NZ_LS483365.1"/>
</dbReference>
<dbReference type="RefSeq" id="YP_501103.1">
    <property type="nucleotide sequence ID" value="NC_007795.1"/>
</dbReference>
<dbReference type="SMR" id="Q2FVR1"/>
<dbReference type="STRING" id="93061.SAOUHSC_02640"/>
<dbReference type="PaxDb" id="1280-SAXN108_2611"/>
<dbReference type="GeneID" id="3921417"/>
<dbReference type="KEGG" id="sao:SAOUHSC_02640"/>
<dbReference type="PATRIC" id="fig|93061.5.peg.2388"/>
<dbReference type="eggNOG" id="COG1136">
    <property type="taxonomic scope" value="Bacteria"/>
</dbReference>
<dbReference type="HOGENOM" id="CLU_000604_1_22_9"/>
<dbReference type="OrthoDB" id="9791546at2"/>
<dbReference type="PRO" id="PR:Q2FVR1"/>
<dbReference type="Proteomes" id="UP000008816">
    <property type="component" value="Chromosome"/>
</dbReference>
<dbReference type="GO" id="GO:0005886">
    <property type="term" value="C:plasma membrane"/>
    <property type="evidence" value="ECO:0000318"/>
    <property type="project" value="GO_Central"/>
</dbReference>
<dbReference type="GO" id="GO:0005524">
    <property type="term" value="F:ATP binding"/>
    <property type="evidence" value="ECO:0007669"/>
    <property type="project" value="UniProtKB-KW"/>
</dbReference>
<dbReference type="GO" id="GO:0016887">
    <property type="term" value="F:ATP hydrolysis activity"/>
    <property type="evidence" value="ECO:0007669"/>
    <property type="project" value="InterPro"/>
</dbReference>
<dbReference type="GO" id="GO:0022857">
    <property type="term" value="F:transmembrane transporter activity"/>
    <property type="evidence" value="ECO:0000318"/>
    <property type="project" value="GO_Central"/>
</dbReference>
<dbReference type="GO" id="GO:0055085">
    <property type="term" value="P:transmembrane transport"/>
    <property type="evidence" value="ECO:0000318"/>
    <property type="project" value="GO_Central"/>
</dbReference>
<dbReference type="CDD" id="cd03255">
    <property type="entry name" value="ABC_MJ0796_LolCDE_FtsE"/>
    <property type="match status" value="1"/>
</dbReference>
<dbReference type="FunFam" id="3.40.50.300:FF:000032">
    <property type="entry name" value="Export ABC transporter ATP-binding protein"/>
    <property type="match status" value="1"/>
</dbReference>
<dbReference type="Gene3D" id="3.40.50.300">
    <property type="entry name" value="P-loop containing nucleotide triphosphate hydrolases"/>
    <property type="match status" value="1"/>
</dbReference>
<dbReference type="InterPro" id="IPR003593">
    <property type="entry name" value="AAA+_ATPase"/>
</dbReference>
<dbReference type="InterPro" id="IPR003439">
    <property type="entry name" value="ABC_transporter-like_ATP-bd"/>
</dbReference>
<dbReference type="InterPro" id="IPR015854">
    <property type="entry name" value="ABC_transpr_LolD-like"/>
</dbReference>
<dbReference type="InterPro" id="IPR017911">
    <property type="entry name" value="MacB-like_ATP-bd"/>
</dbReference>
<dbReference type="InterPro" id="IPR027417">
    <property type="entry name" value="P-loop_NTPase"/>
</dbReference>
<dbReference type="PANTHER" id="PTHR24220:SF666">
    <property type="entry name" value="HEMIN IMPORT ATP-BINDING PROTEIN HRTA-RELATED"/>
    <property type="match status" value="1"/>
</dbReference>
<dbReference type="PANTHER" id="PTHR24220">
    <property type="entry name" value="IMPORT ATP-BINDING PROTEIN"/>
    <property type="match status" value="1"/>
</dbReference>
<dbReference type="Pfam" id="PF00005">
    <property type="entry name" value="ABC_tran"/>
    <property type="match status" value="1"/>
</dbReference>
<dbReference type="SMART" id="SM00382">
    <property type="entry name" value="AAA"/>
    <property type="match status" value="1"/>
</dbReference>
<dbReference type="SUPFAM" id="SSF52540">
    <property type="entry name" value="P-loop containing nucleoside triphosphate hydrolases"/>
    <property type="match status" value="1"/>
</dbReference>
<dbReference type="PROSITE" id="PS50893">
    <property type="entry name" value="ABC_TRANSPORTER_2"/>
    <property type="match status" value="1"/>
</dbReference>
<comment type="function">
    <text evidence="1">Part of the ABC transporter complex hrt involved in hemin import. Responsible for energy coupling to the transport system (By similarity).</text>
</comment>
<comment type="subunit">
    <text evidence="1">The complex is composed of two ATP-binding proteins (HrtA), two transmembrane proteins (HrtB) and a solute-binding protein.</text>
</comment>
<comment type="subcellular location">
    <subcellularLocation>
        <location evidence="3">Cell membrane</location>
        <topology evidence="3">Peripheral membrane protein</topology>
    </subcellularLocation>
</comment>
<comment type="similarity">
    <text evidence="3">Belongs to the ABC transporter superfamily. HrtA family.</text>
</comment>
<proteinExistence type="inferred from homology"/>
<reference key="1">
    <citation type="book" date="2006" name="Gram positive pathogens, 2nd edition">
        <title>The Staphylococcus aureus NCTC 8325 genome.</title>
        <editorList>
            <person name="Fischetti V."/>
            <person name="Novick R."/>
            <person name="Ferretti J."/>
            <person name="Portnoy D."/>
            <person name="Rood J."/>
        </editorList>
        <authorList>
            <person name="Gillaspy A.F."/>
            <person name="Worrell V."/>
            <person name="Orvis J."/>
            <person name="Roe B.A."/>
            <person name="Dyer D.W."/>
            <person name="Iandolo J.J."/>
        </authorList>
    </citation>
    <scope>NUCLEOTIDE SEQUENCE [LARGE SCALE GENOMIC DNA]</scope>
    <source>
        <strain>NCTC 8325 / PS 47</strain>
    </source>
</reference>
<gene>
    <name type="primary">hrtA</name>
    <name type="ordered locus">SAOUHSC_02640</name>
</gene>
<feature type="chain" id="PRO_0000270135" description="Putative hemin import ATP-binding protein HrtA">
    <location>
        <begin position="1"/>
        <end position="221"/>
    </location>
</feature>
<feature type="domain" description="ABC transporter" evidence="2">
    <location>
        <begin position="3"/>
        <end position="221"/>
    </location>
</feature>
<feature type="binding site" evidence="2">
    <location>
        <begin position="39"/>
        <end position="46"/>
    </location>
    <ligand>
        <name>ATP</name>
        <dbReference type="ChEBI" id="CHEBI:30616"/>
    </ligand>
</feature>
<protein>
    <recommendedName>
        <fullName>Putative hemin import ATP-binding protein HrtA</fullName>
        <ecNumber>7.6.2.-</ecNumber>
    </recommendedName>
</protein>
<sequence length="221" mass="24626">MALVVEDIVKNFGEGLSETKVLKGINFEVEQGEFVILNGASGSGKTTLLTILGGLLSQTSGTVLYNDAPLFDKQHRPSDLRLEDIGFIFQSSHLVPYLKVIEQLTLVGQEAGMTKQQSSTRAIQLLKNIGLEDRLNVYPHQLSGGEKQRVAIMRAFMNNPKIILADEPTASLDADRATKVVEMIRQQIKEQQMIGIMITHDRRLFEYADRVIELEDGKITD</sequence>
<accession>Q2FVR1</accession>
<name>HRTA_STAA8</name>
<organism>
    <name type="scientific">Staphylococcus aureus (strain NCTC 8325 / PS 47)</name>
    <dbReference type="NCBI Taxonomy" id="93061"/>
    <lineage>
        <taxon>Bacteria</taxon>
        <taxon>Bacillati</taxon>
        <taxon>Bacillota</taxon>
        <taxon>Bacilli</taxon>
        <taxon>Bacillales</taxon>
        <taxon>Staphylococcaceae</taxon>
        <taxon>Staphylococcus</taxon>
    </lineage>
</organism>
<keyword id="KW-0067">ATP-binding</keyword>
<keyword id="KW-1003">Cell membrane</keyword>
<keyword id="KW-0472">Membrane</keyword>
<keyword id="KW-0547">Nucleotide-binding</keyword>
<keyword id="KW-1185">Reference proteome</keyword>
<keyword id="KW-1278">Translocase</keyword>
<keyword id="KW-0813">Transport</keyword>
<evidence type="ECO:0000250" key="1"/>
<evidence type="ECO:0000255" key="2">
    <source>
        <dbReference type="PROSITE-ProRule" id="PRU00434"/>
    </source>
</evidence>
<evidence type="ECO:0000305" key="3"/>